<protein>
    <recommendedName>
        <fullName evidence="1">Glutamine--fructose-6-phosphate aminotransferase [isomerizing]</fullName>
        <ecNumber evidence="1">2.6.1.16</ecNumber>
    </recommendedName>
    <alternativeName>
        <fullName evidence="1">D-fructose-6-phosphate amidotransferase</fullName>
    </alternativeName>
    <alternativeName>
        <fullName evidence="1">GFAT</fullName>
    </alternativeName>
    <alternativeName>
        <fullName evidence="1">Glucosamine-6-phosphate synthase</fullName>
    </alternativeName>
    <alternativeName>
        <fullName evidence="1">Hexosephosphate aminotransferase</fullName>
    </alternativeName>
    <alternativeName>
        <fullName evidence="1">L-glutamine--D-fructose-6-phosphate amidotransferase</fullName>
    </alternativeName>
</protein>
<reference key="1">
    <citation type="journal article" date="2003" name="Genome Res.">
        <title>Comparative genome analysis of Vibrio vulnificus, a marine pathogen.</title>
        <authorList>
            <person name="Chen C.-Y."/>
            <person name="Wu K.-M."/>
            <person name="Chang Y.-C."/>
            <person name="Chang C.-H."/>
            <person name="Tsai H.-C."/>
            <person name="Liao T.-L."/>
            <person name="Liu Y.-M."/>
            <person name="Chen H.-J."/>
            <person name="Shen A.B.-T."/>
            <person name="Li J.-C."/>
            <person name="Su T.-L."/>
            <person name="Shao C.-P."/>
            <person name="Lee C.-T."/>
            <person name="Hor L.-I."/>
            <person name="Tsai S.-F."/>
        </authorList>
    </citation>
    <scope>NUCLEOTIDE SEQUENCE [LARGE SCALE GENOMIC DNA]</scope>
    <source>
        <strain>YJ016</strain>
    </source>
</reference>
<dbReference type="EC" id="2.6.1.16" evidence="1"/>
<dbReference type="EMBL" id="BA000037">
    <property type="protein sequence ID" value="BAC93266.1"/>
    <property type="molecule type" value="Genomic_DNA"/>
</dbReference>
<dbReference type="RefSeq" id="WP_011149416.1">
    <property type="nucleotide sequence ID" value="NC_005139.1"/>
</dbReference>
<dbReference type="SMR" id="Q7MP62"/>
<dbReference type="STRING" id="672.VV93_v1c04680"/>
<dbReference type="KEGG" id="vvy:VV0502"/>
<dbReference type="PATRIC" id="fig|196600.6.peg.526"/>
<dbReference type="eggNOG" id="COG0449">
    <property type="taxonomic scope" value="Bacteria"/>
</dbReference>
<dbReference type="HOGENOM" id="CLU_012520_5_2_6"/>
<dbReference type="Proteomes" id="UP000002675">
    <property type="component" value="Chromosome I"/>
</dbReference>
<dbReference type="GO" id="GO:0005829">
    <property type="term" value="C:cytosol"/>
    <property type="evidence" value="ECO:0007669"/>
    <property type="project" value="TreeGrafter"/>
</dbReference>
<dbReference type="GO" id="GO:0097367">
    <property type="term" value="F:carbohydrate derivative binding"/>
    <property type="evidence" value="ECO:0007669"/>
    <property type="project" value="InterPro"/>
</dbReference>
<dbReference type="GO" id="GO:0004360">
    <property type="term" value="F:glutamine-fructose-6-phosphate transaminase (isomerizing) activity"/>
    <property type="evidence" value="ECO:0007669"/>
    <property type="project" value="UniProtKB-UniRule"/>
</dbReference>
<dbReference type="GO" id="GO:0005975">
    <property type="term" value="P:carbohydrate metabolic process"/>
    <property type="evidence" value="ECO:0007669"/>
    <property type="project" value="UniProtKB-UniRule"/>
</dbReference>
<dbReference type="GO" id="GO:0006002">
    <property type="term" value="P:fructose 6-phosphate metabolic process"/>
    <property type="evidence" value="ECO:0007669"/>
    <property type="project" value="TreeGrafter"/>
</dbReference>
<dbReference type="GO" id="GO:0006487">
    <property type="term" value="P:protein N-linked glycosylation"/>
    <property type="evidence" value="ECO:0007669"/>
    <property type="project" value="TreeGrafter"/>
</dbReference>
<dbReference type="GO" id="GO:0006047">
    <property type="term" value="P:UDP-N-acetylglucosamine metabolic process"/>
    <property type="evidence" value="ECO:0007669"/>
    <property type="project" value="TreeGrafter"/>
</dbReference>
<dbReference type="CDD" id="cd00714">
    <property type="entry name" value="GFAT"/>
    <property type="match status" value="1"/>
</dbReference>
<dbReference type="CDD" id="cd05008">
    <property type="entry name" value="SIS_GlmS_GlmD_1"/>
    <property type="match status" value="1"/>
</dbReference>
<dbReference type="CDD" id="cd05009">
    <property type="entry name" value="SIS_GlmS_GlmD_2"/>
    <property type="match status" value="1"/>
</dbReference>
<dbReference type="FunFam" id="3.40.50.10490:FF:000001">
    <property type="entry name" value="Glutamine--fructose-6-phosphate aminotransferase [isomerizing]"/>
    <property type="match status" value="1"/>
</dbReference>
<dbReference type="FunFam" id="3.40.50.10490:FF:000002">
    <property type="entry name" value="Glutamine--fructose-6-phosphate aminotransferase [isomerizing]"/>
    <property type="match status" value="1"/>
</dbReference>
<dbReference type="FunFam" id="3.60.20.10:FF:000006">
    <property type="entry name" value="Glutamine--fructose-6-phosphate aminotransferase [isomerizing]"/>
    <property type="match status" value="1"/>
</dbReference>
<dbReference type="Gene3D" id="3.40.50.10490">
    <property type="entry name" value="Glucose-6-phosphate isomerase like protein, domain 1"/>
    <property type="match status" value="2"/>
</dbReference>
<dbReference type="Gene3D" id="3.60.20.10">
    <property type="entry name" value="Glutamine Phosphoribosylpyrophosphate, subunit 1, domain 1"/>
    <property type="match status" value="1"/>
</dbReference>
<dbReference type="HAMAP" id="MF_00164">
    <property type="entry name" value="GlmS"/>
    <property type="match status" value="1"/>
</dbReference>
<dbReference type="InterPro" id="IPR017932">
    <property type="entry name" value="GATase_2_dom"/>
</dbReference>
<dbReference type="InterPro" id="IPR005855">
    <property type="entry name" value="GFAT"/>
</dbReference>
<dbReference type="InterPro" id="IPR047084">
    <property type="entry name" value="GFAT_N"/>
</dbReference>
<dbReference type="InterPro" id="IPR035466">
    <property type="entry name" value="GlmS/AgaS_SIS"/>
</dbReference>
<dbReference type="InterPro" id="IPR035490">
    <property type="entry name" value="GlmS/FrlB_SIS"/>
</dbReference>
<dbReference type="InterPro" id="IPR029055">
    <property type="entry name" value="Ntn_hydrolases_N"/>
</dbReference>
<dbReference type="InterPro" id="IPR001347">
    <property type="entry name" value="SIS_dom"/>
</dbReference>
<dbReference type="InterPro" id="IPR046348">
    <property type="entry name" value="SIS_dom_sf"/>
</dbReference>
<dbReference type="NCBIfam" id="TIGR01135">
    <property type="entry name" value="glmS"/>
    <property type="match status" value="1"/>
</dbReference>
<dbReference type="NCBIfam" id="NF001484">
    <property type="entry name" value="PRK00331.1"/>
    <property type="match status" value="1"/>
</dbReference>
<dbReference type="PANTHER" id="PTHR10937">
    <property type="entry name" value="GLUCOSAMINE--FRUCTOSE-6-PHOSPHATE AMINOTRANSFERASE, ISOMERIZING"/>
    <property type="match status" value="1"/>
</dbReference>
<dbReference type="PANTHER" id="PTHR10937:SF0">
    <property type="entry name" value="GLUTAMINE--FRUCTOSE-6-PHOSPHATE TRANSAMINASE (ISOMERIZING)"/>
    <property type="match status" value="1"/>
</dbReference>
<dbReference type="Pfam" id="PF13522">
    <property type="entry name" value="GATase_6"/>
    <property type="match status" value="1"/>
</dbReference>
<dbReference type="Pfam" id="PF01380">
    <property type="entry name" value="SIS"/>
    <property type="match status" value="2"/>
</dbReference>
<dbReference type="SUPFAM" id="SSF56235">
    <property type="entry name" value="N-terminal nucleophile aminohydrolases (Ntn hydrolases)"/>
    <property type="match status" value="1"/>
</dbReference>
<dbReference type="SUPFAM" id="SSF53697">
    <property type="entry name" value="SIS domain"/>
    <property type="match status" value="1"/>
</dbReference>
<dbReference type="PROSITE" id="PS51278">
    <property type="entry name" value="GATASE_TYPE_2"/>
    <property type="match status" value="1"/>
</dbReference>
<dbReference type="PROSITE" id="PS51464">
    <property type="entry name" value="SIS"/>
    <property type="match status" value="2"/>
</dbReference>
<evidence type="ECO:0000255" key="1">
    <source>
        <dbReference type="HAMAP-Rule" id="MF_00164"/>
    </source>
</evidence>
<gene>
    <name evidence="1" type="primary">glmS</name>
    <name type="ordered locus">VV0502</name>
</gene>
<accession>Q7MP62</accession>
<organism>
    <name type="scientific">Vibrio vulnificus (strain YJ016)</name>
    <dbReference type="NCBI Taxonomy" id="196600"/>
    <lineage>
        <taxon>Bacteria</taxon>
        <taxon>Pseudomonadati</taxon>
        <taxon>Pseudomonadota</taxon>
        <taxon>Gammaproteobacteria</taxon>
        <taxon>Vibrionales</taxon>
        <taxon>Vibrionaceae</taxon>
        <taxon>Vibrio</taxon>
    </lineage>
</organism>
<name>GLMS_VIBVY</name>
<sequence length="610" mass="66662">MCGIVGAVAQRDVAEILVEGLRRLEYRGYDSAGVAVVDSQSNLTRIRRLGKVQELADAVDQAEVVGGTGIAHTRWATHGEPSEINAHPHQSGDISVVHNGIIENHETLRELLQSRGYVFESQTDTEVIAHLVEWELRTAASLLEAVQKTVKQLEGAYGTVVLDRNDPSRIVVARSGSPIVIGFGVGENFLASDQLALLNVTRRFMYLEEGDVAEITRREVAVYDALGERVEREIAESNAEHDAGDKGQYRHFMQKEIYEQPTALINTMEGRITADSVVTEAIGVNAAEILSKVEHVQIVACGTSYNAGMTARYWFEDIAGVSCDVEIASEFRYRKFVTRPNSLLITLSQSGETADTLAALRLAKEKGYMAAMTICNVAGSSLVRESDFAFMTRAGVEIGVASTKAFTTQLAALLMLVTALGKQQGRISKEKEKEIVEALHALPKQINAALSFEKDIEALATDFADKHHTLFLGRGEFYPIAMEASLKLKEISYIHAEAYAAGELKHGPLALIDADMPVVVVAPSNDLLEKLKSNVEEVRARGGLLYVFADADAGFEGDETMKIITMPHVSEITAAIYYTIPMQLLSYYVALIKGTDVDQPRNLAKAVTVE</sequence>
<proteinExistence type="inferred from homology"/>
<keyword id="KW-0032">Aminotransferase</keyword>
<keyword id="KW-0963">Cytoplasm</keyword>
<keyword id="KW-0315">Glutamine amidotransferase</keyword>
<keyword id="KW-0677">Repeat</keyword>
<keyword id="KW-0808">Transferase</keyword>
<feature type="initiator methionine" description="Removed" evidence="1">
    <location>
        <position position="1"/>
    </location>
</feature>
<feature type="chain" id="PRO_0000135412" description="Glutamine--fructose-6-phosphate aminotransferase [isomerizing]">
    <location>
        <begin position="2"/>
        <end position="610"/>
    </location>
</feature>
<feature type="domain" description="Glutamine amidotransferase type-2" evidence="1">
    <location>
        <begin position="2"/>
        <end position="218"/>
    </location>
</feature>
<feature type="domain" description="SIS 1" evidence="1">
    <location>
        <begin position="286"/>
        <end position="426"/>
    </location>
</feature>
<feature type="domain" description="SIS 2" evidence="1">
    <location>
        <begin position="459"/>
        <end position="600"/>
    </location>
</feature>
<feature type="active site" description="Nucleophile; for GATase activity" evidence="1">
    <location>
        <position position="2"/>
    </location>
</feature>
<feature type="active site" description="For Fru-6P isomerization activity" evidence="1">
    <location>
        <position position="605"/>
    </location>
</feature>
<comment type="function">
    <text evidence="1">Catalyzes the first step in hexosamine metabolism, converting fructose-6P into glucosamine-6P using glutamine as a nitrogen source.</text>
</comment>
<comment type="catalytic activity">
    <reaction evidence="1">
        <text>D-fructose 6-phosphate + L-glutamine = D-glucosamine 6-phosphate + L-glutamate</text>
        <dbReference type="Rhea" id="RHEA:13237"/>
        <dbReference type="ChEBI" id="CHEBI:29985"/>
        <dbReference type="ChEBI" id="CHEBI:58359"/>
        <dbReference type="ChEBI" id="CHEBI:58725"/>
        <dbReference type="ChEBI" id="CHEBI:61527"/>
        <dbReference type="EC" id="2.6.1.16"/>
    </reaction>
</comment>
<comment type="subunit">
    <text evidence="1">Homodimer.</text>
</comment>
<comment type="subcellular location">
    <subcellularLocation>
        <location evidence="1">Cytoplasm</location>
    </subcellularLocation>
</comment>